<feature type="chain" id="PRO_0000454032" description="Probable xylan O-acetyltransferase 8">
    <location>
        <begin position="1"/>
        <end position="442"/>
    </location>
</feature>
<feature type="topological domain" description="Cytoplasmic" evidence="8">
    <location>
        <begin position="1"/>
        <end position="13"/>
    </location>
</feature>
<feature type="transmembrane region" description="Helical; Signal-anchor for type II membrane protein" evidence="3">
    <location>
        <begin position="14"/>
        <end position="34"/>
    </location>
</feature>
<feature type="topological domain" description="Lumenal" evidence="8">
    <location>
        <begin position="35"/>
        <end position="442"/>
    </location>
</feature>
<feature type="short sequence motif" description="GDS motif" evidence="9">
    <location>
        <begin position="174"/>
        <end position="176"/>
    </location>
</feature>
<feature type="short sequence motif" description="DXXH motif" evidence="9">
    <location>
        <begin position="421"/>
        <end position="424"/>
    </location>
</feature>
<feature type="active site" description="Nucleophile" evidence="2">
    <location>
        <position position="176"/>
    </location>
</feature>
<feature type="active site" description="Proton donor" evidence="2">
    <location>
        <position position="421"/>
    </location>
</feature>
<feature type="active site" description="Proton acceptor" evidence="2">
    <location>
        <position position="424"/>
    </location>
</feature>
<feature type="glycosylation site" description="N-linked (GlcNAc...) asparagine" evidence="4">
    <location>
        <position position="96"/>
    </location>
</feature>
<feature type="glycosylation site" description="N-linked (GlcNAc...) asparagine" evidence="4">
    <location>
        <position position="217"/>
    </location>
</feature>
<feature type="glycosylation site" description="N-linked (GlcNAc...) asparagine" evidence="4">
    <location>
        <position position="346"/>
    </location>
</feature>
<feature type="glycosylation site" description="N-linked (GlcNAc...) asparagine" evidence="4">
    <location>
        <position position="384"/>
    </location>
</feature>
<feature type="disulfide bond" evidence="2">
    <location>
        <begin position="100"/>
        <end position="151"/>
    </location>
</feature>
<feature type="disulfide bond" evidence="2">
    <location>
        <begin position="122"/>
        <end position="187"/>
    </location>
</feature>
<feature type="disulfide bond" evidence="2">
    <location>
        <begin position="131"/>
        <end position="426"/>
    </location>
</feature>
<feature type="disulfide bond" evidence="2">
    <location>
        <begin position="344"/>
        <end position="422"/>
    </location>
</feature>
<comment type="function">
    <text evidence="5">Probable xylan acetyltransferase required for 2-O- and 3-O-monoacetylation of xylosyl residues in xylan (PubMed:29569182). Possesses extremely low activity in vitro (PubMed:29569182).</text>
</comment>
<comment type="subcellular location">
    <subcellularLocation>
        <location evidence="1">Golgi apparatus membrane</location>
        <topology evidence="3">Single-pass type II membrane protein</topology>
    </subcellularLocation>
</comment>
<comment type="similarity">
    <text evidence="8">Belongs to the PC-esterase family. TBL subfamily.</text>
</comment>
<proteinExistence type="evidence at protein level"/>
<reference key="1">
    <citation type="journal article" date="2018" name="Planta">
        <title>Biochemical characterization of rice xylan O-acetyltransferases.</title>
        <authorList>
            <person name="Zhong R."/>
            <person name="Cui D."/>
            <person name="Dasher R.L."/>
            <person name="Ye Z.H."/>
        </authorList>
    </citation>
    <scope>NUCLEOTIDE SEQUENCE [MRNA]</scope>
    <scope>FUNCTION</scope>
    <scope>CATALYTIC ACTIVITY</scope>
</reference>
<reference key="2">
    <citation type="journal article" date="2005" name="Genome Res.">
        <title>Sequence, annotation, and analysis of synteny between rice chromosome 3 and diverged grass species.</title>
        <authorList>
            <consortium name="The rice chromosome 3 sequencing consortium"/>
            <person name="Buell C.R."/>
            <person name="Yuan Q."/>
            <person name="Ouyang S."/>
            <person name="Liu J."/>
            <person name="Zhu W."/>
            <person name="Wang A."/>
            <person name="Maiti R."/>
            <person name="Haas B."/>
            <person name="Wortman J."/>
            <person name="Pertea M."/>
            <person name="Jones K.M."/>
            <person name="Kim M."/>
            <person name="Overton L."/>
            <person name="Tsitrin T."/>
            <person name="Fadrosh D."/>
            <person name="Bera J."/>
            <person name="Weaver B."/>
            <person name="Jin S."/>
            <person name="Johri S."/>
            <person name="Reardon M."/>
            <person name="Webb K."/>
            <person name="Hill J."/>
            <person name="Moffat K."/>
            <person name="Tallon L."/>
            <person name="Van Aken S."/>
            <person name="Lewis M."/>
            <person name="Utterback T."/>
            <person name="Feldblyum T."/>
            <person name="Zismann V."/>
            <person name="Iobst S."/>
            <person name="Hsiao J."/>
            <person name="de Vazeille A.R."/>
            <person name="Salzberg S.L."/>
            <person name="White O."/>
            <person name="Fraser C.M."/>
            <person name="Yu Y."/>
            <person name="Kim H."/>
            <person name="Rambo T."/>
            <person name="Currie J."/>
            <person name="Collura K."/>
            <person name="Kernodle-Thompson S."/>
            <person name="Wei F."/>
            <person name="Kudrna K."/>
            <person name="Ammiraju J.S.S."/>
            <person name="Luo M."/>
            <person name="Goicoechea J.L."/>
            <person name="Wing R.A."/>
            <person name="Henry D."/>
            <person name="Oates R."/>
            <person name="Palmer M."/>
            <person name="Pries G."/>
            <person name="Saski C."/>
            <person name="Simmons J."/>
            <person name="Soderlund C."/>
            <person name="Nelson W."/>
            <person name="de la Bastide M."/>
            <person name="Spiegel L."/>
            <person name="Nascimento L."/>
            <person name="Huang E."/>
            <person name="Preston R."/>
            <person name="Zutavern T."/>
            <person name="Palmer L."/>
            <person name="O'Shaughnessy A."/>
            <person name="Dike S."/>
            <person name="McCombie W.R."/>
            <person name="Minx P."/>
            <person name="Cordum H."/>
            <person name="Wilson R."/>
            <person name="Jin W."/>
            <person name="Lee H.R."/>
            <person name="Jiang J."/>
            <person name="Jackson S."/>
        </authorList>
    </citation>
    <scope>NUCLEOTIDE SEQUENCE [LARGE SCALE GENOMIC DNA]</scope>
    <source>
        <strain>cv. Nipponbare</strain>
    </source>
</reference>
<reference key="3">
    <citation type="journal article" date="2005" name="Nature">
        <title>The map-based sequence of the rice genome.</title>
        <authorList>
            <consortium name="International rice genome sequencing project (IRGSP)"/>
        </authorList>
    </citation>
    <scope>NUCLEOTIDE SEQUENCE [LARGE SCALE GENOMIC DNA]</scope>
    <source>
        <strain>cv. Nipponbare</strain>
    </source>
</reference>
<reference key="4">
    <citation type="journal article" date="2008" name="Nucleic Acids Res.">
        <title>The rice annotation project database (RAP-DB): 2008 update.</title>
        <authorList>
            <consortium name="The rice annotation project (RAP)"/>
        </authorList>
    </citation>
    <scope>GENOME REANNOTATION</scope>
    <source>
        <strain>cv. Nipponbare</strain>
    </source>
</reference>
<reference key="5">
    <citation type="journal article" date="2013" name="Rice">
        <title>Improvement of the Oryza sativa Nipponbare reference genome using next generation sequence and optical map data.</title>
        <authorList>
            <person name="Kawahara Y."/>
            <person name="de la Bastide M."/>
            <person name="Hamilton J.P."/>
            <person name="Kanamori H."/>
            <person name="McCombie W.R."/>
            <person name="Ouyang S."/>
            <person name="Schwartz D.C."/>
            <person name="Tanaka T."/>
            <person name="Wu J."/>
            <person name="Zhou S."/>
            <person name="Childs K.L."/>
            <person name="Davidson R.M."/>
            <person name="Lin H."/>
            <person name="Quesada-Ocampo L."/>
            <person name="Vaillancourt B."/>
            <person name="Sakai H."/>
            <person name="Lee S.S."/>
            <person name="Kim J."/>
            <person name="Numa H."/>
            <person name="Itoh T."/>
            <person name="Buell C.R."/>
            <person name="Matsumoto T."/>
        </authorList>
    </citation>
    <scope>GENOME REANNOTATION</scope>
    <source>
        <strain>cv. Nipponbare</strain>
    </source>
</reference>
<reference key="6">
    <citation type="journal article" date="2003" name="Science">
        <title>Collection, mapping, and annotation of over 28,000 cDNA clones from japonica rice.</title>
        <authorList>
            <consortium name="The rice full-length cDNA consortium"/>
        </authorList>
    </citation>
    <scope>NUCLEOTIDE SEQUENCE [LARGE SCALE MRNA]</scope>
    <source>
        <strain>cv. Nipponbare</strain>
    </source>
</reference>
<reference key="7">
    <citation type="journal article" date="2017" name="Plant Physiol.">
        <title>Two trichome birefringence-like proteins mediate xylan acetylation, which is essential for leaf blight resistance in rice.</title>
        <authorList>
            <person name="Gao Y."/>
            <person name="He C."/>
            <person name="Zhang D."/>
            <person name="Liu X."/>
            <person name="Xu Z."/>
            <person name="Tian Y."/>
            <person name="Liu X.H."/>
            <person name="Zang S."/>
            <person name="Pauly M."/>
            <person name="Zhou Y."/>
            <person name="Zhang B."/>
        </authorList>
    </citation>
    <scope>GENE FAMILY</scope>
    <scope>NOMENCLATURE</scope>
</reference>
<name>XOAT8_ORYSJ</name>
<protein>
    <recommendedName>
        <fullName evidence="7">Probable xylan O-acetyltransferase 8</fullName>
        <ecNumber evidence="5">2.3.1.-</ecNumber>
    </recommendedName>
    <alternativeName>
        <fullName evidence="6">Protein trichome birefringence-like 8</fullName>
        <shortName evidence="6">OsTBL8</shortName>
    </alternativeName>
</protein>
<dbReference type="EC" id="2.3.1.-" evidence="5"/>
<dbReference type="EMBL" id="MH037022">
    <property type="protein sequence ID" value="AVR54512.1"/>
    <property type="molecule type" value="mRNA"/>
</dbReference>
<dbReference type="EMBL" id="DP000009">
    <property type="protein sequence ID" value="ABF95400.1"/>
    <property type="molecule type" value="Genomic_DNA"/>
</dbReference>
<dbReference type="EMBL" id="AP008209">
    <property type="protein sequence ID" value="BAF11712.1"/>
    <property type="molecule type" value="Genomic_DNA"/>
</dbReference>
<dbReference type="EMBL" id="AP014959">
    <property type="protein sequence ID" value="BAS83671.1"/>
    <property type="molecule type" value="Genomic_DNA"/>
</dbReference>
<dbReference type="EMBL" id="AK110898">
    <property type="protein sequence ID" value="BAG99075.1"/>
    <property type="molecule type" value="mRNA"/>
</dbReference>
<dbReference type="SMR" id="Q10MX4"/>
<dbReference type="FunCoup" id="Q10MX4">
    <property type="interactions" value="569"/>
</dbReference>
<dbReference type="GlyCosmos" id="Q10MX4">
    <property type="glycosylation" value="4 sites, No reported glycans"/>
</dbReference>
<dbReference type="PaxDb" id="39947-Q10MX4"/>
<dbReference type="EnsemblPlants" id="Os03t0291200-01">
    <property type="protein sequence ID" value="Os03t0291200-01"/>
    <property type="gene ID" value="Os03g0291200"/>
</dbReference>
<dbReference type="GeneID" id="4332503"/>
<dbReference type="Gramene" id="Os03t0291200-01">
    <property type="protein sequence ID" value="Os03t0291200-01"/>
    <property type="gene ID" value="Os03g0291200"/>
</dbReference>
<dbReference type="KEGG" id="dosa:Os03g0291200"/>
<dbReference type="KEGG" id="osa:4332503"/>
<dbReference type="eggNOG" id="ENOG502QT29">
    <property type="taxonomic scope" value="Eukaryota"/>
</dbReference>
<dbReference type="HOGENOM" id="CLU_020953_3_1_1"/>
<dbReference type="InParanoid" id="Q10MX4"/>
<dbReference type="OMA" id="YTDCIHW"/>
<dbReference type="OrthoDB" id="630188at2759"/>
<dbReference type="Proteomes" id="UP000000763">
    <property type="component" value="Chromosome 3"/>
</dbReference>
<dbReference type="Proteomes" id="UP000059680">
    <property type="component" value="Chromosome 3"/>
</dbReference>
<dbReference type="GO" id="GO:0005794">
    <property type="term" value="C:Golgi apparatus"/>
    <property type="evidence" value="ECO:0000318"/>
    <property type="project" value="GO_Central"/>
</dbReference>
<dbReference type="GO" id="GO:0000139">
    <property type="term" value="C:Golgi membrane"/>
    <property type="evidence" value="ECO:0000250"/>
    <property type="project" value="UniProtKB"/>
</dbReference>
<dbReference type="GO" id="GO:0005886">
    <property type="term" value="C:plasma membrane"/>
    <property type="evidence" value="ECO:0007669"/>
    <property type="project" value="EnsemblPlants"/>
</dbReference>
<dbReference type="GO" id="GO:0016413">
    <property type="term" value="F:O-acetyltransferase activity"/>
    <property type="evidence" value="ECO:0000318"/>
    <property type="project" value="GO_Central"/>
</dbReference>
<dbReference type="GO" id="GO:1990538">
    <property type="term" value="F:xylan O-acetyltransferase activity"/>
    <property type="evidence" value="ECO:0000314"/>
    <property type="project" value="UniProtKB"/>
</dbReference>
<dbReference type="GO" id="GO:0030244">
    <property type="term" value="P:cellulose biosynthetic process"/>
    <property type="evidence" value="ECO:0007669"/>
    <property type="project" value="EnsemblPlants"/>
</dbReference>
<dbReference type="GO" id="GO:0045489">
    <property type="term" value="P:pectin biosynthetic process"/>
    <property type="evidence" value="ECO:0007669"/>
    <property type="project" value="EnsemblPlants"/>
</dbReference>
<dbReference type="GO" id="GO:0009827">
    <property type="term" value="P:plant-type cell wall modification"/>
    <property type="evidence" value="ECO:0007669"/>
    <property type="project" value="EnsemblPlants"/>
</dbReference>
<dbReference type="GO" id="GO:1990937">
    <property type="term" value="P:xylan acetylation"/>
    <property type="evidence" value="ECO:0000314"/>
    <property type="project" value="UniProtKB"/>
</dbReference>
<dbReference type="GO" id="GO:0045492">
    <property type="term" value="P:xylan biosynthetic process"/>
    <property type="evidence" value="ECO:0007669"/>
    <property type="project" value="EnsemblPlants"/>
</dbReference>
<dbReference type="InterPro" id="IPR029962">
    <property type="entry name" value="TBL"/>
</dbReference>
<dbReference type="InterPro" id="IPR026057">
    <property type="entry name" value="TBL_C"/>
</dbReference>
<dbReference type="InterPro" id="IPR025846">
    <property type="entry name" value="TBL_N"/>
</dbReference>
<dbReference type="PANTHER" id="PTHR32285:SF7">
    <property type="entry name" value="PROTEIN TRICHOME BIREFRINGENCE-LIKE 3"/>
    <property type="match status" value="1"/>
</dbReference>
<dbReference type="PANTHER" id="PTHR32285">
    <property type="entry name" value="PROTEIN TRICHOME BIREFRINGENCE-LIKE 9-RELATED"/>
    <property type="match status" value="1"/>
</dbReference>
<dbReference type="Pfam" id="PF13839">
    <property type="entry name" value="PC-Esterase"/>
    <property type="match status" value="1"/>
</dbReference>
<dbReference type="Pfam" id="PF14416">
    <property type="entry name" value="PMR5N"/>
    <property type="match status" value="1"/>
</dbReference>
<organism>
    <name type="scientific">Oryza sativa subsp. japonica</name>
    <name type="common">Rice</name>
    <dbReference type="NCBI Taxonomy" id="39947"/>
    <lineage>
        <taxon>Eukaryota</taxon>
        <taxon>Viridiplantae</taxon>
        <taxon>Streptophyta</taxon>
        <taxon>Embryophyta</taxon>
        <taxon>Tracheophyta</taxon>
        <taxon>Spermatophyta</taxon>
        <taxon>Magnoliopsida</taxon>
        <taxon>Liliopsida</taxon>
        <taxon>Poales</taxon>
        <taxon>Poaceae</taxon>
        <taxon>BOP clade</taxon>
        <taxon>Oryzoideae</taxon>
        <taxon>Oryzeae</taxon>
        <taxon>Oryzinae</taxon>
        <taxon>Oryza</taxon>
        <taxon>Oryza sativa</taxon>
    </lineage>
</organism>
<evidence type="ECO:0000250" key="1">
    <source>
        <dbReference type="UniProtKB" id="Q2QYU2"/>
    </source>
</evidence>
<evidence type="ECO:0000250" key="2">
    <source>
        <dbReference type="UniProtKB" id="Q9LY46"/>
    </source>
</evidence>
<evidence type="ECO:0000255" key="3"/>
<evidence type="ECO:0000255" key="4">
    <source>
        <dbReference type="PROSITE-ProRule" id="PRU00498"/>
    </source>
</evidence>
<evidence type="ECO:0000269" key="5">
    <source>
    </source>
</evidence>
<evidence type="ECO:0000303" key="6">
    <source>
    </source>
</evidence>
<evidence type="ECO:0000303" key="7">
    <source>
    </source>
</evidence>
<evidence type="ECO:0000305" key="8"/>
<evidence type="ECO:0000305" key="9">
    <source>
    </source>
</evidence>
<evidence type="ECO:0000312" key="10">
    <source>
        <dbReference type="EMBL" id="ABF95400.1"/>
    </source>
</evidence>
<evidence type="ECO:0000312" key="11">
    <source>
        <dbReference type="EMBL" id="BAS83671.1"/>
    </source>
</evidence>
<gene>
    <name evidence="7" type="primary">XOAT8</name>
    <name evidence="6" type="synonym">TBL8</name>
    <name evidence="11" type="ordered locus">Os03g0291200</name>
    <name evidence="10" type="ordered locus">LOC_Os03g18120</name>
</gene>
<keyword id="KW-1015">Disulfide bond</keyword>
<keyword id="KW-0325">Glycoprotein</keyword>
<keyword id="KW-0333">Golgi apparatus</keyword>
<keyword id="KW-0472">Membrane</keyword>
<keyword id="KW-1185">Reference proteome</keyword>
<keyword id="KW-0735">Signal-anchor</keyword>
<keyword id="KW-0808">Transferase</keyword>
<keyword id="KW-0812">Transmembrane</keyword>
<keyword id="KW-1133">Transmembrane helix</keyword>
<sequence>MVQLPAMKRVKGRAPLSVVVAIIGGLALAGIIFTEDLRGLTEVKEKVTDKEKKRTSLRTVMRTSALLSADQPPPPAVLSVEPATATPPPAPKMAFNATRCSVTDGYWAYDRSKKLPYTDQTCPYVDRQDSCQRNGRPDSDYLYWDWHLDDCLLPRFDPVSMLEKLRGKRIMFVGDSLQLGQWLSFVCLVNSAVPDTPGAKSMERSRTLSVYTVKEYNASIEFYWAPFLVESNSDRNIALGAGGRVLHVDAIEEHGKHWRRADILVFDSYVWWMTGYRIKSVWGSFGDDGYEELDAWVAYRLGLKTWANWVDSNVDPATTRVFFMSISTTHMRSEDWGREGGIRCYNETWPITQRGYRGSGSDRRMMEVMSDVLGRMRTPVTLLNITQLTEHRVDAHVSVYTETGGLLVTDEEKTDPQRYTDCIHWCIPGVPDTWNRLLYAHL</sequence>
<accession>Q10MX4</accession>
<accession>Q0DSS6</accession>